<name>WNT1_CAEEL</name>
<keyword id="KW-1003">Cell membrane</keyword>
<keyword id="KW-0963">Cytoplasm</keyword>
<keyword id="KW-0217">Developmental protein</keyword>
<keyword id="KW-1015">Disulfide bond</keyword>
<keyword id="KW-0272">Extracellular matrix</keyword>
<keyword id="KW-0325">Glycoprotein</keyword>
<keyword id="KW-0449">Lipoprotein</keyword>
<keyword id="KW-0472">Membrane</keyword>
<keyword id="KW-0524">Neurogenesis</keyword>
<keyword id="KW-1185">Reference proteome</keyword>
<keyword id="KW-0964">Secreted</keyword>
<keyword id="KW-0732">Signal</keyword>
<keyword id="KW-0879">Wnt signaling pathway</keyword>
<evidence type="ECO:0000250" key="1">
    <source>
        <dbReference type="UniProtKB" id="P27467"/>
    </source>
</evidence>
<evidence type="ECO:0000250" key="2">
    <source>
        <dbReference type="UniProtKB" id="P28026"/>
    </source>
</evidence>
<evidence type="ECO:0000250" key="3">
    <source>
        <dbReference type="UniProtKB" id="P56704"/>
    </source>
</evidence>
<evidence type="ECO:0000250" key="4">
    <source>
        <dbReference type="UniProtKB" id="Q2LMP1"/>
    </source>
</evidence>
<evidence type="ECO:0000255" key="5"/>
<evidence type="ECO:0000269" key="6">
    <source>
    </source>
</evidence>
<evidence type="ECO:0000269" key="7">
    <source>
    </source>
</evidence>
<evidence type="ECO:0000269" key="8">
    <source>
    </source>
</evidence>
<evidence type="ECO:0000269" key="9">
    <source>
    </source>
</evidence>
<evidence type="ECO:0000269" key="10">
    <source>
    </source>
</evidence>
<evidence type="ECO:0000269" key="11">
    <source>
    </source>
</evidence>
<evidence type="ECO:0000269" key="12">
    <source>
    </source>
</evidence>
<evidence type="ECO:0000269" key="13">
    <source>
    </source>
</evidence>
<evidence type="ECO:0000269" key="14">
    <source>
    </source>
</evidence>
<evidence type="ECO:0000305" key="15"/>
<dbReference type="EMBL" id="X72941">
    <property type="protein sequence ID" value="CAA51446.1"/>
    <property type="molecule type" value="mRNA"/>
</dbReference>
<dbReference type="EMBL" id="X72942">
    <property type="protein sequence ID" value="CAA51447.1"/>
    <property type="molecule type" value="Genomic_DNA"/>
</dbReference>
<dbReference type="EMBL" id="FO080912">
    <property type="protein sequence ID" value="CCD67737.1"/>
    <property type="molecule type" value="Genomic_DNA"/>
</dbReference>
<dbReference type="PIR" id="S32694">
    <property type="entry name" value="S32694"/>
</dbReference>
<dbReference type="PIR" id="T43627">
    <property type="entry name" value="T43627"/>
</dbReference>
<dbReference type="RefSeq" id="NP_493668.1">
    <property type="nucleotide sequence ID" value="NM_061267.5"/>
</dbReference>
<dbReference type="SMR" id="P34888"/>
<dbReference type="BioGRID" id="38779">
    <property type="interactions" value="3"/>
</dbReference>
<dbReference type="DIP" id="DIP-24702N"/>
<dbReference type="FunCoup" id="P34888">
    <property type="interactions" value="263"/>
</dbReference>
<dbReference type="IntAct" id="P34888">
    <property type="interactions" value="1"/>
</dbReference>
<dbReference type="STRING" id="6239.K10B4.6a.1"/>
<dbReference type="GlyCosmos" id="P34888">
    <property type="glycosylation" value="2 sites, No reported glycans"/>
</dbReference>
<dbReference type="PaxDb" id="6239-K10B4.6a"/>
<dbReference type="EnsemblMetazoa" id="K10B4.6a.1">
    <property type="protein sequence ID" value="K10B4.6a.1"/>
    <property type="gene ID" value="WBGene00000857"/>
</dbReference>
<dbReference type="GeneID" id="173399"/>
<dbReference type="KEGG" id="cel:CELE_K10B4.6"/>
<dbReference type="UCSC" id="K10B4.6a">
    <property type="organism name" value="c. elegans"/>
</dbReference>
<dbReference type="AGR" id="WB:WBGene00000857"/>
<dbReference type="CTD" id="173399"/>
<dbReference type="WormBase" id="K10B4.6a">
    <property type="protein sequence ID" value="CE12072"/>
    <property type="gene ID" value="WBGene00000857"/>
    <property type="gene designation" value="cwn-1"/>
</dbReference>
<dbReference type="eggNOG" id="KOG3913">
    <property type="taxonomic scope" value="Eukaryota"/>
</dbReference>
<dbReference type="GeneTree" id="ENSGT00940000171022"/>
<dbReference type="HOGENOM" id="CLU_033039_1_0_1"/>
<dbReference type="InParanoid" id="P34888"/>
<dbReference type="OMA" id="ECQFQFH"/>
<dbReference type="OrthoDB" id="5945655at2759"/>
<dbReference type="PhylomeDB" id="P34888"/>
<dbReference type="Reactome" id="R-CEL-3238698">
    <property type="pathway name" value="WNT ligand biogenesis and trafficking"/>
</dbReference>
<dbReference type="Reactome" id="R-CEL-4086400">
    <property type="pathway name" value="PCP/CE pathway"/>
</dbReference>
<dbReference type="SignaLink" id="P34888"/>
<dbReference type="PRO" id="PR:P34888"/>
<dbReference type="Proteomes" id="UP000001940">
    <property type="component" value="Chromosome II"/>
</dbReference>
<dbReference type="Bgee" id="WBGene00000857">
    <property type="expression patterns" value="Expressed in embryo and 22 other cell types or tissues"/>
</dbReference>
<dbReference type="GO" id="GO:0005737">
    <property type="term" value="C:cytoplasm"/>
    <property type="evidence" value="ECO:0007669"/>
    <property type="project" value="UniProtKB-SubCell"/>
</dbReference>
<dbReference type="GO" id="GO:0005615">
    <property type="term" value="C:extracellular space"/>
    <property type="evidence" value="ECO:0000318"/>
    <property type="project" value="GO_Central"/>
</dbReference>
<dbReference type="GO" id="GO:0005886">
    <property type="term" value="C:plasma membrane"/>
    <property type="evidence" value="ECO:0007669"/>
    <property type="project" value="UniProtKB-SubCell"/>
</dbReference>
<dbReference type="GO" id="GO:0005125">
    <property type="term" value="F:cytokine activity"/>
    <property type="evidence" value="ECO:0000318"/>
    <property type="project" value="GO_Central"/>
</dbReference>
<dbReference type="GO" id="GO:0005109">
    <property type="term" value="F:frizzled binding"/>
    <property type="evidence" value="ECO:0000250"/>
    <property type="project" value="WormBase"/>
</dbReference>
<dbReference type="GO" id="GO:0048018">
    <property type="term" value="F:receptor ligand activity"/>
    <property type="evidence" value="ECO:0000250"/>
    <property type="project" value="WormBase"/>
</dbReference>
<dbReference type="GO" id="GO:0030971">
    <property type="term" value="F:receptor tyrosine kinase binding"/>
    <property type="evidence" value="ECO:0000353"/>
    <property type="project" value="WormBase"/>
</dbReference>
<dbReference type="GO" id="GO:0060070">
    <property type="term" value="P:canonical Wnt signaling pathway"/>
    <property type="evidence" value="ECO:0000318"/>
    <property type="project" value="GO_Central"/>
</dbReference>
<dbReference type="GO" id="GO:0045165">
    <property type="term" value="P:cell fate commitment"/>
    <property type="evidence" value="ECO:0000318"/>
    <property type="project" value="GO_Central"/>
</dbReference>
<dbReference type="GO" id="GO:0001708">
    <property type="term" value="P:cell fate specification"/>
    <property type="evidence" value="ECO:0000316"/>
    <property type="project" value="WormBase"/>
</dbReference>
<dbReference type="GO" id="GO:1904936">
    <property type="term" value="P:interneuron migration"/>
    <property type="evidence" value="ECO:0000315"/>
    <property type="project" value="UniProtKB"/>
</dbReference>
<dbReference type="GO" id="GO:0097475">
    <property type="term" value="P:motor neuron migration"/>
    <property type="evidence" value="ECO:0000315"/>
    <property type="project" value="UniProtKB"/>
</dbReference>
<dbReference type="GO" id="GO:0097402">
    <property type="term" value="P:neuroblast migration"/>
    <property type="evidence" value="ECO:0000315"/>
    <property type="project" value="UniProtKB"/>
</dbReference>
<dbReference type="GO" id="GO:0030182">
    <property type="term" value="P:neuron differentiation"/>
    <property type="evidence" value="ECO:0000318"/>
    <property type="project" value="GO_Central"/>
</dbReference>
<dbReference type="GO" id="GO:0001764">
    <property type="term" value="P:neuron migration"/>
    <property type="evidence" value="ECO:0000315"/>
    <property type="project" value="UniProtKB"/>
</dbReference>
<dbReference type="GO" id="GO:1905488">
    <property type="term" value="P:positive regulation of anterior/posterior axon guidance"/>
    <property type="evidence" value="ECO:0000316"/>
    <property type="project" value="UniProtKB"/>
</dbReference>
<dbReference type="GO" id="GO:1905485">
    <property type="term" value="P:positive regulation of motor neuron migration"/>
    <property type="evidence" value="ECO:0000316"/>
    <property type="project" value="UniProtKB"/>
</dbReference>
<dbReference type="GO" id="GO:1905491">
    <property type="term" value="P:positive regulation of sensory neuron axon guidance"/>
    <property type="evidence" value="ECO:0000316"/>
    <property type="project" value="UniProtKB"/>
</dbReference>
<dbReference type="GO" id="GO:0010468">
    <property type="term" value="P:regulation of gene expression"/>
    <property type="evidence" value="ECO:0000315"/>
    <property type="project" value="WormBase"/>
</dbReference>
<dbReference type="GO" id="GO:0040028">
    <property type="term" value="P:regulation of vulval development"/>
    <property type="evidence" value="ECO:0000316"/>
    <property type="project" value="WormBase"/>
</dbReference>
<dbReference type="GO" id="GO:0016055">
    <property type="term" value="P:Wnt signaling pathway"/>
    <property type="evidence" value="ECO:0000250"/>
    <property type="project" value="WormBase"/>
</dbReference>
<dbReference type="CDD" id="cd19336">
    <property type="entry name" value="Wnt_Wnt4"/>
    <property type="match status" value="1"/>
</dbReference>
<dbReference type="FunFam" id="3.30.2460.20:FF:000005">
    <property type="entry name" value="Protein Wnt"/>
    <property type="match status" value="1"/>
</dbReference>
<dbReference type="Gene3D" id="3.30.2460.20">
    <property type="match status" value="1"/>
</dbReference>
<dbReference type="InterPro" id="IPR005817">
    <property type="entry name" value="Wnt"/>
</dbReference>
<dbReference type="InterPro" id="IPR043158">
    <property type="entry name" value="Wnt_C"/>
</dbReference>
<dbReference type="InterPro" id="IPR018161">
    <property type="entry name" value="Wnt_CS"/>
</dbReference>
<dbReference type="PANTHER" id="PTHR12027:SF101">
    <property type="entry name" value="PROTEIN WNT-4"/>
    <property type="match status" value="1"/>
</dbReference>
<dbReference type="PANTHER" id="PTHR12027">
    <property type="entry name" value="WNT RELATED"/>
    <property type="match status" value="1"/>
</dbReference>
<dbReference type="Pfam" id="PF00110">
    <property type="entry name" value="wnt"/>
    <property type="match status" value="1"/>
</dbReference>
<dbReference type="PRINTS" id="PR01349">
    <property type="entry name" value="WNTPROTEIN"/>
</dbReference>
<dbReference type="SMART" id="SM00097">
    <property type="entry name" value="WNT1"/>
    <property type="match status" value="1"/>
</dbReference>
<dbReference type="PROSITE" id="PS00246">
    <property type="entry name" value="WNT1"/>
    <property type="match status" value="1"/>
</dbReference>
<organism>
    <name type="scientific">Caenorhabditis elegans</name>
    <dbReference type="NCBI Taxonomy" id="6239"/>
    <lineage>
        <taxon>Eukaryota</taxon>
        <taxon>Metazoa</taxon>
        <taxon>Ecdysozoa</taxon>
        <taxon>Nematoda</taxon>
        <taxon>Chromadorea</taxon>
        <taxon>Rhabditida</taxon>
        <taxon>Rhabditina</taxon>
        <taxon>Rhabditomorpha</taxon>
        <taxon>Rhabditoidea</taxon>
        <taxon>Rhabditidae</taxon>
        <taxon>Peloderinae</taxon>
        <taxon>Caenorhabditis</taxon>
    </lineage>
</organism>
<comment type="function">
    <text evidence="6 7 8 9 10 12 13 15">Ligand for members of the frizzled family of seven transmembrane receptors. Probable developmental protein. May be a signaling molecule which affects the development of discrete regions of tissues. Is likely to signal over only few cell diameters. Binds receptor tyrosine kinase cam-1 (PubMed:17942487). Together with Wnt ligand cwn-2, regulates the migration of CAN, ALM, BDU and HSN neurons during embryogenesis, the migration of QL and QR neuroblast descendants during larval development, and polarity of ALM neurons (PubMed:16109397, PubMed:16516839, PubMed:18622031, PubMed:25917219). Also acts with the Wnt ligand egl-20 to direct HSN neuron migration (PubMed:16516839). Acts through the Wnt receptor cfz-2 to direct ALM migration (PubMed:16109397). Also plays a role in axon growth and guidance in HSN and male CP neurons (PubMed:16109397). In addition, together with Wnt ligand cwn-2, negatively regulates developmental neurite pruning of AIM neurons probably by acting as a ligand for receptor tyrosine kinase cam-1 (PubMed:19561603). Probably by activating the Wnt/Frizzled pathway, may regulate vulva development (PubMed:17942487). May act redundantly with other Wnt ligands such as cwn-2 and mom-2 to control seam cell polarity (PubMed:22022276).</text>
</comment>
<comment type="subcellular location">
    <subcellularLocation>
        <location evidence="4">Secreted</location>
        <location evidence="4">Extracellular space</location>
        <location evidence="4">Extracellular matrix</location>
    </subcellularLocation>
    <subcellularLocation>
        <location evidence="12">Cytoplasm</location>
    </subcellularLocation>
    <subcellularLocation>
        <location evidence="12">Cell membrane</location>
        <topology evidence="12">Peripheral membrane protein</topology>
    </subcellularLocation>
</comment>
<comment type="tissue specificity">
    <text evidence="10 11 12">Expressed in intestine, some head neurons and ventral nerve cord and pharyngeal neurons (PubMed:19561603). Expressed in the tail and weakly expressed in the vulva and body wall muscles (PubMed:20711352). Expressed highly in posterior dorsal and ventral muscle cells (PubMed:22022276).</text>
</comment>
<comment type="developmental stage">
    <text evidence="7 14">Detected in all larval forms and adults, but is most abundant in the embryonic stage (PubMed:8510930). First expressed in the embryonic tail at the comma stage of embryogenesis (PubMed:16516839). In newly hatched larvae, it is expressed in four stripes of cells lining the dorsal and ventral posterior quadrants of the body (PubMed:16516839). Expression spreads anteriorly becoming restricted to the ventral side of the body as development progresses (PubMed:16516839).</text>
</comment>
<comment type="PTM">
    <text evidence="1 3">Palmitoleoylation is required for efficient binding to frizzled receptors. Depalmitoleoylation leads to Wnt signaling pathway inhibition.</text>
</comment>
<comment type="disruption phenotype">
    <text evidence="6 7">Defective ALM, BDU and QR neuroblast migration and irregular HSN and CP axon growth and guidance (PubMed:16109397). Double knockout with cwn-2 results in ALM and CAN migration defects (PubMed:16109397). Double knockout with either cwn-2 or egl-20 results in HSN migration defects (PubMed:16516839). Triple knockout with cwn-2 and cfz-2 results in enhanced neuronal cell migratory defects (PubMed:16109397).</text>
</comment>
<comment type="similarity">
    <text evidence="15">Belongs to the Wnt family.</text>
</comment>
<gene>
    <name type="primary">cwn-1</name>
    <name type="synonym">wnt-1</name>
    <name type="ORF">K10B4.6</name>
</gene>
<reference key="1">
    <citation type="journal article" date="1993" name="Oncogene">
        <title>Two wnt genes in Caenorhabditis elegans.</title>
        <authorList>
            <person name="Shackleford G.M."/>
            <person name="Shivakumar S."/>
            <person name="Shiue L."/>
            <person name="Mason J."/>
            <person name="Kenyon C."/>
            <person name="Varmus H.E."/>
        </authorList>
    </citation>
    <scope>NUCLEOTIDE SEQUENCE [MRNA]</scope>
    <scope>NUCLEOTIDE SEQUENCE [GENOMIC DNA] OF 1-335</scope>
    <scope>DEVELOPMENTAL STAGE</scope>
    <source>
        <strain>Bristol N2</strain>
    </source>
</reference>
<reference key="2">
    <citation type="journal article" date="1998" name="Science">
        <title>Genome sequence of the nematode C. elegans: a platform for investigating biology.</title>
        <authorList>
            <consortium name="The C. elegans sequencing consortium"/>
        </authorList>
    </citation>
    <scope>NUCLEOTIDE SEQUENCE [LARGE SCALE GENOMIC DNA]</scope>
    <source>
        <strain>Bristol N2</strain>
    </source>
</reference>
<reference key="3">
    <citation type="journal article" date="2005" name="Dev. Biol.">
        <title>The C. elegans Frizzled CFZ-2 is required for cell migration and interacts with multiple Wnt signaling pathways.</title>
        <authorList>
            <person name="Zinovyeva A.Y."/>
            <person name="Forrester W.C."/>
        </authorList>
    </citation>
    <scope>FUNCTION</scope>
    <scope>DISRUPTION PHENOTYPE</scope>
</reference>
<reference key="4">
    <citation type="journal article" date="2006" name="Dev. Cell">
        <title>Multiple Wnts and frizzled receptors regulate anteriorly directed cell and growth cone migrations in Caenorhabditis elegans.</title>
        <authorList>
            <person name="Pan C.L."/>
            <person name="Howell J.E."/>
            <person name="Clark S.G."/>
            <person name="Hilliard M."/>
            <person name="Cordes S."/>
            <person name="Bargmann C.I."/>
            <person name="Garriga G."/>
        </authorList>
    </citation>
    <scope>FUNCTION</scope>
    <scope>DEVELOPMENTAL STAGE</scope>
    <scope>DISRUPTION PHENOTYPE</scope>
</reference>
<reference key="5">
    <citation type="journal article" date="2007" name="Development">
        <title>The C. elegans ROR receptor tyrosine kinase, CAM-1, non-autonomously inhibits the Wnt pathway.</title>
        <authorList>
            <person name="Green J.L."/>
            <person name="Inoue T."/>
            <person name="Sternberg P.W."/>
        </authorList>
    </citation>
    <scope>FUNCTION</scope>
</reference>
<reference key="6">
    <citation type="journal article" date="2008" name="Genetics">
        <title>Complex network of Wnt signaling regulates neuronal migrations during Caenorhabditis elegans development.</title>
        <authorList>
            <person name="Zinovyeva A.Y."/>
            <person name="Yamamoto Y."/>
            <person name="Sawa H."/>
            <person name="Forrester W.C."/>
        </authorList>
    </citation>
    <scope>FUNCTION</scope>
</reference>
<reference key="7">
    <citation type="journal article" date="2009" name="Nat. Neurosci.">
        <title>A trophic role for Wnt-Ror kinase signaling during developmental pruning in Caenorhabditis elegans.</title>
        <authorList>
            <person name="Hayashi Y."/>
            <person name="Hirotsu T."/>
            <person name="Iwata R."/>
            <person name="Kage-Nakadai E."/>
            <person name="Kunitomo H."/>
            <person name="Ishihara T."/>
            <person name="Iino Y."/>
            <person name="Kubo T."/>
        </authorList>
    </citation>
    <scope>FUNCTION</scope>
    <scope>TISSUE SPECIFICITY</scope>
</reference>
<reference key="8">
    <citation type="journal article" date="2010" name="PLoS Genet.">
        <title>A Wnt-Frz/Ror-Dsh pathway regulates neurite outgrowth in Caenorhabditis elegans.</title>
        <authorList>
            <person name="Song S."/>
            <person name="Zhang B."/>
            <person name="Sun H."/>
            <person name="Li X."/>
            <person name="Xiang Y."/>
            <person name="Liu Z."/>
            <person name="Huang X."/>
            <person name="Ding M."/>
        </authorList>
    </citation>
    <scope>TISSUE SPECIFICITY</scope>
</reference>
<reference key="9">
    <citation type="journal article" date="2011" name="PLoS Genet.">
        <title>Multiple Wnts redundantly control polarity orientation in Caenorhabditis elegans epithelial stem cells.</title>
        <authorList>
            <person name="Yamamoto Y."/>
            <person name="Takeshita H."/>
            <person name="Sawa H."/>
        </authorList>
    </citation>
    <scope>FUNCTION</scope>
    <scope>SUBCELLULAR LOCATION</scope>
    <scope>TISSUE SPECIFICITY</scope>
</reference>
<reference key="10">
    <citation type="journal article" date="2015" name="Dev. Biol.">
        <title>Autonomous and nonautonomous regulation of Wnt-mediated neuronal polarity by the C. elegans Ror kinase CAM-1.</title>
        <authorList>
            <person name="Chien S.C."/>
            <person name="Gurling M."/>
            <person name="Kim C."/>
            <person name="Craft T."/>
            <person name="Forrester W."/>
            <person name="Garriga G."/>
        </authorList>
    </citation>
    <scope>FUNCTION</scope>
</reference>
<accession>P34888</accession>
<proteinExistence type="evidence at transcript level"/>
<protein>
    <recommendedName>
        <fullName>Protein Wnt-1</fullName>
    </recommendedName>
</protein>
<sequence length="372" mass="41975">MLKSTQVILIFILLISIVESLSWLALGLAANRFDRDKPGTSCKSLKGLTRRQMRFCKKNIDLMESVRSGSLAAHAECQFQFHKRRWNCTLIDPVTHEVIPDVFLYENTRESAFVHAISSAAVAYKVTRDCARGISERCGCDYSKNDHSGKSQFQYQGCSDNVKFGIGVSKEFVDSAQRRVLMMKDDNGTSLLGPSQLSADGMHMINLHNNQAGRQVLEKSLRRECKCHGMSGSCEMRTCWDSLPNFRHIGMAIKDKFDGAAEVKVVKEDGIEKPRIVMKNSQFKRHTNADLVYMTPSPDFCESDPLRGILGTKGRQCTLAPNAIDDCSLLCCGRGYEKKVQIVEEKCNCKFIYCCEVRCEPCQKRIEKYLCL</sequence>
<feature type="signal peptide" evidence="5">
    <location>
        <begin position="1"/>
        <end position="29"/>
    </location>
</feature>
<feature type="chain" id="PRO_0000041473" description="Protein Wnt-1">
    <location>
        <begin position="30"/>
        <end position="372"/>
    </location>
</feature>
<feature type="lipid moiety-binding region" description="O-palmitoleoyl serine; by mom-1" evidence="3">
    <location>
        <position position="231"/>
    </location>
</feature>
<feature type="glycosylation site" description="N-linked (GlcNAc...) asparagine" evidence="5">
    <location>
        <position position="87"/>
    </location>
</feature>
<feature type="glycosylation site" description="N-linked (GlcNAc...) asparagine" evidence="5">
    <location>
        <position position="187"/>
    </location>
</feature>
<feature type="disulfide bond" evidence="2">
    <location>
        <begin position="77"/>
        <end position="88"/>
    </location>
</feature>
<feature type="disulfide bond" evidence="2">
    <location>
        <begin position="130"/>
        <end position="138"/>
    </location>
</feature>
<feature type="disulfide bond" evidence="2">
    <location>
        <begin position="140"/>
        <end position="158"/>
    </location>
</feature>
<feature type="disulfide bond" evidence="2">
    <location>
        <begin position="225"/>
        <end position="239"/>
    </location>
</feature>
<feature type="disulfide bond" evidence="2">
    <location>
        <begin position="227"/>
        <end position="234"/>
    </location>
</feature>
<feature type="disulfide bond" evidence="2">
    <location>
        <begin position="301"/>
        <end position="332"/>
    </location>
</feature>
<feature type="disulfide bond" evidence="2">
    <location>
        <begin position="317"/>
        <end position="327"/>
    </location>
</feature>
<feature type="disulfide bond" evidence="2">
    <location>
        <begin position="331"/>
        <end position="371"/>
    </location>
</feature>
<feature type="disulfide bond" evidence="2">
    <location>
        <begin position="347"/>
        <end position="362"/>
    </location>
</feature>
<feature type="disulfide bond" evidence="2">
    <location>
        <begin position="349"/>
        <end position="359"/>
    </location>
</feature>
<feature type="disulfide bond" evidence="2">
    <location>
        <begin position="354"/>
        <end position="355"/>
    </location>
</feature>